<proteinExistence type="inferred from homology"/>
<feature type="chain" id="PRO_1000074600" description="Ribosome-recycling factor">
    <location>
        <begin position="1"/>
        <end position="185"/>
    </location>
</feature>
<gene>
    <name evidence="1" type="primary">frr</name>
    <name type="ordered locus">Sbal195_1484</name>
</gene>
<organism>
    <name type="scientific">Shewanella baltica (strain OS195)</name>
    <dbReference type="NCBI Taxonomy" id="399599"/>
    <lineage>
        <taxon>Bacteria</taxon>
        <taxon>Pseudomonadati</taxon>
        <taxon>Pseudomonadota</taxon>
        <taxon>Gammaproteobacteria</taxon>
        <taxon>Alteromonadales</taxon>
        <taxon>Shewanellaceae</taxon>
        <taxon>Shewanella</taxon>
    </lineage>
</organism>
<sequence length="185" mass="20684">MIENIKKDAQERMGKCVDATKNQMAKVRTGRAHPSLLDSIQVSYYGTMTPLNQVANVGVEDSRTLSVTVFDRSAIQAVEKAIMSSDLGLNPMSAGATLRIPLPALTEERRKDFIKVVRNEAENGRIAIRNVRRDAISEVKKLEKAKACTEDDVRRSEEEVQKFTDAHIKKVDEILAAKEIELMEV</sequence>
<evidence type="ECO:0000255" key="1">
    <source>
        <dbReference type="HAMAP-Rule" id="MF_00040"/>
    </source>
</evidence>
<protein>
    <recommendedName>
        <fullName evidence="1">Ribosome-recycling factor</fullName>
        <shortName evidence="1">RRF</shortName>
    </recommendedName>
    <alternativeName>
        <fullName evidence="1">Ribosome-releasing factor</fullName>
    </alternativeName>
</protein>
<accession>A9KUK8</accession>
<keyword id="KW-0963">Cytoplasm</keyword>
<keyword id="KW-0648">Protein biosynthesis</keyword>
<dbReference type="EMBL" id="CP000891">
    <property type="protein sequence ID" value="ABX48657.1"/>
    <property type="molecule type" value="Genomic_DNA"/>
</dbReference>
<dbReference type="RefSeq" id="WP_012088724.1">
    <property type="nucleotide sequence ID" value="NC_009997.1"/>
</dbReference>
<dbReference type="SMR" id="A9KUK8"/>
<dbReference type="GeneID" id="11771733"/>
<dbReference type="KEGG" id="sbn:Sbal195_1484"/>
<dbReference type="HOGENOM" id="CLU_073981_2_1_6"/>
<dbReference type="Proteomes" id="UP000000770">
    <property type="component" value="Chromosome"/>
</dbReference>
<dbReference type="GO" id="GO:0005829">
    <property type="term" value="C:cytosol"/>
    <property type="evidence" value="ECO:0007669"/>
    <property type="project" value="GOC"/>
</dbReference>
<dbReference type="GO" id="GO:0043023">
    <property type="term" value="F:ribosomal large subunit binding"/>
    <property type="evidence" value="ECO:0007669"/>
    <property type="project" value="TreeGrafter"/>
</dbReference>
<dbReference type="GO" id="GO:0002184">
    <property type="term" value="P:cytoplasmic translational termination"/>
    <property type="evidence" value="ECO:0007669"/>
    <property type="project" value="TreeGrafter"/>
</dbReference>
<dbReference type="CDD" id="cd00520">
    <property type="entry name" value="RRF"/>
    <property type="match status" value="1"/>
</dbReference>
<dbReference type="FunFam" id="1.10.132.20:FF:000001">
    <property type="entry name" value="Ribosome-recycling factor"/>
    <property type="match status" value="1"/>
</dbReference>
<dbReference type="FunFam" id="3.30.1360.40:FF:000001">
    <property type="entry name" value="Ribosome-recycling factor"/>
    <property type="match status" value="1"/>
</dbReference>
<dbReference type="Gene3D" id="3.30.1360.40">
    <property type="match status" value="1"/>
</dbReference>
<dbReference type="Gene3D" id="1.10.132.20">
    <property type="entry name" value="Ribosome-recycling factor"/>
    <property type="match status" value="1"/>
</dbReference>
<dbReference type="HAMAP" id="MF_00040">
    <property type="entry name" value="RRF"/>
    <property type="match status" value="1"/>
</dbReference>
<dbReference type="InterPro" id="IPR002661">
    <property type="entry name" value="Ribosome_recyc_fac"/>
</dbReference>
<dbReference type="InterPro" id="IPR023584">
    <property type="entry name" value="Ribosome_recyc_fac_dom"/>
</dbReference>
<dbReference type="InterPro" id="IPR036191">
    <property type="entry name" value="RRF_sf"/>
</dbReference>
<dbReference type="NCBIfam" id="TIGR00496">
    <property type="entry name" value="frr"/>
    <property type="match status" value="1"/>
</dbReference>
<dbReference type="PANTHER" id="PTHR20982:SF3">
    <property type="entry name" value="MITOCHONDRIAL RIBOSOME RECYCLING FACTOR PSEUDO 1"/>
    <property type="match status" value="1"/>
</dbReference>
<dbReference type="PANTHER" id="PTHR20982">
    <property type="entry name" value="RIBOSOME RECYCLING FACTOR"/>
    <property type="match status" value="1"/>
</dbReference>
<dbReference type="Pfam" id="PF01765">
    <property type="entry name" value="RRF"/>
    <property type="match status" value="1"/>
</dbReference>
<dbReference type="SUPFAM" id="SSF55194">
    <property type="entry name" value="Ribosome recycling factor, RRF"/>
    <property type="match status" value="1"/>
</dbReference>
<comment type="function">
    <text evidence="1">Responsible for the release of ribosomes from messenger RNA at the termination of protein biosynthesis. May increase the efficiency of translation by recycling ribosomes from one round of translation to another.</text>
</comment>
<comment type="subcellular location">
    <subcellularLocation>
        <location evidence="1">Cytoplasm</location>
    </subcellularLocation>
</comment>
<comment type="similarity">
    <text evidence="1">Belongs to the RRF family.</text>
</comment>
<reference key="1">
    <citation type="submission" date="2007-11" db="EMBL/GenBank/DDBJ databases">
        <title>Complete sequence of chromosome of Shewanella baltica OS195.</title>
        <authorList>
            <consortium name="US DOE Joint Genome Institute"/>
            <person name="Copeland A."/>
            <person name="Lucas S."/>
            <person name="Lapidus A."/>
            <person name="Barry K."/>
            <person name="Glavina del Rio T."/>
            <person name="Dalin E."/>
            <person name="Tice H."/>
            <person name="Pitluck S."/>
            <person name="Chain P."/>
            <person name="Malfatti S."/>
            <person name="Shin M."/>
            <person name="Vergez L."/>
            <person name="Schmutz J."/>
            <person name="Larimer F."/>
            <person name="Land M."/>
            <person name="Hauser L."/>
            <person name="Kyrpides N."/>
            <person name="Kim E."/>
            <person name="Brettar I."/>
            <person name="Rodrigues J."/>
            <person name="Konstantinidis K."/>
            <person name="Klappenbach J."/>
            <person name="Hofle M."/>
            <person name="Tiedje J."/>
            <person name="Richardson P."/>
        </authorList>
    </citation>
    <scope>NUCLEOTIDE SEQUENCE [LARGE SCALE GENOMIC DNA]</scope>
    <source>
        <strain>OS195</strain>
    </source>
</reference>
<name>RRF_SHEB9</name>